<feature type="chain" id="PRO_0000429086" description="Transcription factor PRE5">
    <location>
        <begin position="1"/>
        <end position="92"/>
    </location>
</feature>
<feature type="domain" description="bHLH" evidence="1">
    <location>
        <begin position="4"/>
        <end position="59"/>
    </location>
</feature>
<comment type="function">
    <text evidence="2">Atypical and probable non DNA-binding bHLH transcription factor that integrates multiple signaling pathways to regulate cell elongation and plant development. May have a regulatory role in various aspects of gibberellin-dependent growth and development.</text>
</comment>
<comment type="subunit">
    <text evidence="3">Interacts with IBH1.</text>
</comment>
<comment type="interaction">
    <interactant intactId="EBI-15195291">
        <id>Q9LJX1</id>
    </interactant>
    <interactant intactId="EBI-15192969">
        <id>Q9M0B9</id>
        <label>IBL1</label>
    </interactant>
    <organismsDiffer>false</organismsDiffer>
    <experiments>5</experiments>
</comment>
<comment type="subcellular location">
    <subcellularLocation>
        <location evidence="1">Nucleus</location>
    </subcellularLocation>
</comment>
<comment type="miscellaneous">
    <text evidence="5">Plants over-expressing PRE5 show long hypocotyls, pale green and slightly narrow leaves, elongated petioles and early flowering. They are not sensitive to the gibberellin inhibitor paclobutrazol during seed germination (PubMed:16527868).</text>
</comment>
<comment type="similarity">
    <text evidence="4">Belongs to the bHLH protein family.</text>
</comment>
<organism>
    <name type="scientific">Arabidopsis thaliana</name>
    <name type="common">Mouse-ear cress</name>
    <dbReference type="NCBI Taxonomy" id="3702"/>
    <lineage>
        <taxon>Eukaryota</taxon>
        <taxon>Viridiplantae</taxon>
        <taxon>Streptophyta</taxon>
        <taxon>Embryophyta</taxon>
        <taxon>Tracheophyta</taxon>
        <taxon>Spermatophyta</taxon>
        <taxon>Magnoliopsida</taxon>
        <taxon>eudicotyledons</taxon>
        <taxon>Gunneridae</taxon>
        <taxon>Pentapetalae</taxon>
        <taxon>rosids</taxon>
        <taxon>malvids</taxon>
        <taxon>Brassicales</taxon>
        <taxon>Brassicaceae</taxon>
        <taxon>Camelineae</taxon>
        <taxon>Arabidopsis</taxon>
    </lineage>
</organism>
<sequence>MSNRRSRQTSNASRISDDQMIDLVSKLRQFLPEIHERRRSDKVSASKVLQETCNYIRKLHREVDNLSDRLSQLLDSVDEDSPEAAVIRSLLM</sequence>
<protein>
    <recommendedName>
        <fullName>Transcription factor PRE5</fullName>
    </recommendedName>
    <alternativeName>
        <fullName>Basic helix-loop-helix protein 164</fullName>
        <shortName>AtbHLH164</shortName>
        <shortName>bHLH 164</shortName>
    </alternativeName>
    <alternativeName>
        <fullName>Protein PACLOBUTRAZOL RESISTANCE 5</fullName>
    </alternativeName>
    <alternativeName>
        <fullName>bHLH transcription factor bHLH164</fullName>
    </alternativeName>
</protein>
<accession>Q9LJX1</accession>
<accession>Q8L919</accession>
<evidence type="ECO:0000255" key="1">
    <source>
        <dbReference type="PROSITE-ProRule" id="PRU00981"/>
    </source>
</evidence>
<evidence type="ECO:0000269" key="2">
    <source>
    </source>
</evidence>
<evidence type="ECO:0000269" key="3">
    <source>
    </source>
</evidence>
<evidence type="ECO:0000305" key="4"/>
<evidence type="ECO:0000305" key="5">
    <source>
    </source>
</evidence>
<keyword id="KW-0939">Gibberellin signaling pathway</keyword>
<keyword id="KW-0341">Growth regulation</keyword>
<keyword id="KW-0539">Nucleus</keyword>
<keyword id="KW-1185">Reference proteome</keyword>
<keyword id="KW-0804">Transcription</keyword>
<keyword id="KW-0805">Transcription regulation</keyword>
<name>PRE5_ARATH</name>
<gene>
    <name type="primary">PRE5</name>
    <name type="synonym">BHLH164</name>
    <name type="ordered locus">At3g28857</name>
    <name type="ORF">MLD15.1</name>
</gene>
<reference key="1">
    <citation type="journal article" date="2000" name="DNA Res.">
        <title>Structural analysis of Arabidopsis thaliana chromosome 3. II. Sequence features of the 4,251,695 bp regions covered by 90 P1, TAC and BAC clones.</title>
        <authorList>
            <person name="Kaneko T."/>
            <person name="Katoh T."/>
            <person name="Sato S."/>
            <person name="Nakamura Y."/>
            <person name="Asamizu E."/>
            <person name="Tabata S."/>
        </authorList>
    </citation>
    <scope>NUCLEOTIDE SEQUENCE [LARGE SCALE GENOMIC DNA]</scope>
    <source>
        <strain>cv. Columbia</strain>
    </source>
</reference>
<reference key="2">
    <citation type="journal article" date="2017" name="Plant J.">
        <title>Araport11: a complete reannotation of the Arabidopsis thaliana reference genome.</title>
        <authorList>
            <person name="Cheng C.Y."/>
            <person name="Krishnakumar V."/>
            <person name="Chan A.P."/>
            <person name="Thibaud-Nissen F."/>
            <person name="Schobel S."/>
            <person name="Town C.D."/>
        </authorList>
    </citation>
    <scope>GENOME REANNOTATION</scope>
    <source>
        <strain>cv. Columbia</strain>
    </source>
</reference>
<reference key="3">
    <citation type="submission" date="2006-02" db="EMBL/GenBank/DDBJ databases">
        <title>Arabidopsis ORF clones.</title>
        <authorList>
            <person name="Shinn P."/>
            <person name="Chen H."/>
            <person name="Kim C.J."/>
            <person name="Ecker J.R."/>
        </authorList>
    </citation>
    <scope>NUCLEOTIDE SEQUENCE [LARGE SCALE MRNA]</scope>
    <source>
        <strain>cv. Columbia</strain>
    </source>
</reference>
<reference key="4">
    <citation type="submission" date="2002-03" db="EMBL/GenBank/DDBJ databases">
        <title>Full-length cDNA from Arabidopsis thaliana.</title>
        <authorList>
            <person name="Brover V.V."/>
            <person name="Troukhan M.E."/>
            <person name="Alexandrov N.A."/>
            <person name="Lu Y.-P."/>
            <person name="Flavell R.B."/>
            <person name="Feldmann K.A."/>
        </authorList>
    </citation>
    <scope>NUCLEOTIDE SEQUENCE [LARGE SCALE MRNA]</scope>
</reference>
<reference key="5">
    <citation type="journal article" date="2006" name="Plant Cell Physiol.">
        <title>Overexpression of PRE1 and its homologous genes activates gibberellin-dependent responses in Arabidopsis thaliana.</title>
        <authorList>
            <person name="Lee S."/>
            <person name="Lee S."/>
            <person name="Yang K.Y."/>
            <person name="Kim Y.M."/>
            <person name="Park S.Y."/>
            <person name="Kim S.Y."/>
            <person name="Soh M.S."/>
        </authorList>
    </citation>
    <scope>FUNCTION</scope>
    <scope>TISSUE SPECIFICITY</scope>
</reference>
<reference key="6">
    <citation type="journal article" date="2012" name="Plant Cell">
        <title>A triantagonistic basic helix-loop-helix system regulates cell elongation in Arabidopsis.</title>
        <authorList>
            <person name="Ikeda M."/>
            <person name="Fujiwara S."/>
            <person name="Mitsuda N."/>
            <person name="Ohme-Takagi M."/>
        </authorList>
    </citation>
    <scope>INTERACTION WITH IBH1</scope>
</reference>
<dbReference type="EMBL" id="AP000386">
    <property type="protein sequence ID" value="BAB02128.1"/>
    <property type="molecule type" value="Genomic_DNA"/>
</dbReference>
<dbReference type="EMBL" id="CP002686">
    <property type="protein sequence ID" value="AEE77497.1"/>
    <property type="molecule type" value="Genomic_DNA"/>
</dbReference>
<dbReference type="EMBL" id="BT024640">
    <property type="protein sequence ID" value="ABD57465.1"/>
    <property type="molecule type" value="mRNA"/>
</dbReference>
<dbReference type="EMBL" id="AY088680">
    <property type="protein sequence ID" value="AAM67002.1"/>
    <property type="molecule type" value="mRNA"/>
</dbReference>
<dbReference type="RefSeq" id="NP_974372.1">
    <property type="nucleotide sequence ID" value="NM_202643.2"/>
</dbReference>
<dbReference type="SMR" id="Q9LJX1"/>
<dbReference type="BioGRID" id="30502">
    <property type="interactions" value="10"/>
</dbReference>
<dbReference type="FunCoup" id="Q9LJX1">
    <property type="interactions" value="101"/>
</dbReference>
<dbReference type="IntAct" id="Q9LJX1">
    <property type="interactions" value="10"/>
</dbReference>
<dbReference type="STRING" id="3702.Q9LJX1"/>
<dbReference type="PaxDb" id="3702-AT3G28857.1"/>
<dbReference type="ProteomicsDB" id="236599"/>
<dbReference type="EnsemblPlants" id="AT3G28857.1">
    <property type="protein sequence ID" value="AT3G28857.1"/>
    <property type="gene ID" value="AT3G28857"/>
</dbReference>
<dbReference type="GeneID" id="2745895"/>
<dbReference type="Gramene" id="AT3G28857.1">
    <property type="protein sequence ID" value="AT3G28857.1"/>
    <property type="gene ID" value="AT3G28857"/>
</dbReference>
<dbReference type="KEGG" id="ath:AT3G28857"/>
<dbReference type="Araport" id="AT3G28857"/>
<dbReference type="TAIR" id="AT3G28857">
    <property type="gene designation" value="PRE5"/>
</dbReference>
<dbReference type="eggNOG" id="ENOG502S648">
    <property type="taxonomic scope" value="Eukaryota"/>
</dbReference>
<dbReference type="HOGENOM" id="CLU_183267_0_0_1"/>
<dbReference type="InParanoid" id="Q9LJX1"/>
<dbReference type="OMA" id="MDMNSAE"/>
<dbReference type="OrthoDB" id="988630at2759"/>
<dbReference type="PhylomeDB" id="Q9LJX1"/>
<dbReference type="PRO" id="PR:Q9LJX1"/>
<dbReference type="Proteomes" id="UP000006548">
    <property type="component" value="Chromosome 3"/>
</dbReference>
<dbReference type="ExpressionAtlas" id="Q9LJX1">
    <property type="expression patterns" value="baseline and differential"/>
</dbReference>
<dbReference type="GO" id="GO:0005634">
    <property type="term" value="C:nucleus"/>
    <property type="evidence" value="ECO:0007669"/>
    <property type="project" value="UniProtKB-SubCell"/>
</dbReference>
<dbReference type="GO" id="GO:0046983">
    <property type="term" value="F:protein dimerization activity"/>
    <property type="evidence" value="ECO:0007669"/>
    <property type="project" value="InterPro"/>
</dbReference>
<dbReference type="GO" id="GO:0009740">
    <property type="term" value="P:gibberellic acid mediated signaling pathway"/>
    <property type="evidence" value="ECO:0007669"/>
    <property type="project" value="UniProtKB-KW"/>
</dbReference>
<dbReference type="GO" id="GO:0006355">
    <property type="term" value="P:regulation of DNA-templated transcription"/>
    <property type="evidence" value="ECO:0007669"/>
    <property type="project" value="InterPro"/>
</dbReference>
<dbReference type="GO" id="GO:0040008">
    <property type="term" value="P:regulation of growth"/>
    <property type="evidence" value="ECO:0007669"/>
    <property type="project" value="InterPro"/>
</dbReference>
<dbReference type="CDD" id="cd11442">
    <property type="entry name" value="bHLH_AtPRE_like"/>
    <property type="match status" value="1"/>
</dbReference>
<dbReference type="FunFam" id="4.10.280.10:FF:000082">
    <property type="entry name" value="Transcription factor ILI6"/>
    <property type="match status" value="1"/>
</dbReference>
<dbReference type="Gene3D" id="4.10.280.10">
    <property type="entry name" value="Helix-loop-helix DNA-binding domain"/>
    <property type="match status" value="1"/>
</dbReference>
<dbReference type="InterPro" id="IPR011598">
    <property type="entry name" value="bHLH_dom"/>
</dbReference>
<dbReference type="InterPro" id="IPR036638">
    <property type="entry name" value="HLH_DNA-bd_sf"/>
</dbReference>
<dbReference type="InterPro" id="IPR044293">
    <property type="entry name" value="PRE"/>
</dbReference>
<dbReference type="PANTHER" id="PTHR46446">
    <property type="entry name" value="TRANSCRIPTION FACTOR PRE"/>
    <property type="match status" value="1"/>
</dbReference>
<dbReference type="PANTHER" id="PTHR46446:SF28">
    <property type="entry name" value="TRANSCRIPTION FACTOR PRE5"/>
    <property type="match status" value="1"/>
</dbReference>
<dbReference type="Pfam" id="PF23174">
    <property type="entry name" value="bHLH_ILI"/>
    <property type="match status" value="1"/>
</dbReference>
<dbReference type="SUPFAM" id="SSF47459">
    <property type="entry name" value="HLH, helix-loop-helix DNA-binding domain"/>
    <property type="match status" value="1"/>
</dbReference>
<dbReference type="PROSITE" id="PS50888">
    <property type="entry name" value="BHLH"/>
    <property type="match status" value="1"/>
</dbReference>
<proteinExistence type="evidence at protein level"/>